<name>Y8570_DICDI</name>
<feature type="chain" id="PRO_0000346941" description="Putative uncharacterized protein DDB_G0289765">
    <location>
        <begin position="1"/>
        <end position="98"/>
    </location>
</feature>
<keyword id="KW-1185">Reference proteome</keyword>
<sequence>MFRIILERIEHSLKFSTLQEVDFGVGFKTKITERKFNRNSIGANDILFFQLSERPGQTLFFSSAVFKQSIINELNRLNNYLNRPYSIDNEPFPFSLTF</sequence>
<dbReference type="EMBL" id="AAFI02000148">
    <property type="protein sequence ID" value="EAL62594.1"/>
    <property type="molecule type" value="Genomic_DNA"/>
</dbReference>
<dbReference type="RefSeq" id="XP_636107.1">
    <property type="nucleotide sequence ID" value="XM_631015.1"/>
</dbReference>
<dbReference type="PaxDb" id="44689-DDB0188570"/>
<dbReference type="EnsemblProtists" id="EAL62594">
    <property type="protein sequence ID" value="EAL62594"/>
    <property type="gene ID" value="DDB_G0289765"/>
</dbReference>
<dbReference type="GeneID" id="8627320"/>
<dbReference type="KEGG" id="ddi:DDB_G0289765"/>
<dbReference type="dictyBase" id="DDB_G0289765"/>
<dbReference type="VEuPathDB" id="AmoebaDB:DDB_G0289765"/>
<dbReference type="HOGENOM" id="CLU_2337950_0_0_1"/>
<dbReference type="InParanoid" id="Q54H11"/>
<dbReference type="PRO" id="PR:Q54H11"/>
<dbReference type="Proteomes" id="UP000002195">
    <property type="component" value="Chromosome 5"/>
</dbReference>
<protein>
    <recommendedName>
        <fullName>Putative uncharacterized protein DDB_G0289765</fullName>
    </recommendedName>
</protein>
<accession>Q54H11</accession>
<proteinExistence type="predicted"/>
<reference key="1">
    <citation type="journal article" date="2005" name="Nature">
        <title>The genome of the social amoeba Dictyostelium discoideum.</title>
        <authorList>
            <person name="Eichinger L."/>
            <person name="Pachebat J.A."/>
            <person name="Gloeckner G."/>
            <person name="Rajandream M.A."/>
            <person name="Sucgang R."/>
            <person name="Berriman M."/>
            <person name="Song J."/>
            <person name="Olsen R."/>
            <person name="Szafranski K."/>
            <person name="Xu Q."/>
            <person name="Tunggal B."/>
            <person name="Kummerfeld S."/>
            <person name="Madera M."/>
            <person name="Konfortov B.A."/>
            <person name="Rivero F."/>
            <person name="Bankier A.T."/>
            <person name="Lehmann R."/>
            <person name="Hamlin N."/>
            <person name="Davies R."/>
            <person name="Gaudet P."/>
            <person name="Fey P."/>
            <person name="Pilcher K."/>
            <person name="Chen G."/>
            <person name="Saunders D."/>
            <person name="Sodergren E.J."/>
            <person name="Davis P."/>
            <person name="Kerhornou A."/>
            <person name="Nie X."/>
            <person name="Hall N."/>
            <person name="Anjard C."/>
            <person name="Hemphill L."/>
            <person name="Bason N."/>
            <person name="Farbrother P."/>
            <person name="Desany B."/>
            <person name="Just E."/>
            <person name="Morio T."/>
            <person name="Rost R."/>
            <person name="Churcher C.M."/>
            <person name="Cooper J."/>
            <person name="Haydock S."/>
            <person name="van Driessche N."/>
            <person name="Cronin A."/>
            <person name="Goodhead I."/>
            <person name="Muzny D.M."/>
            <person name="Mourier T."/>
            <person name="Pain A."/>
            <person name="Lu M."/>
            <person name="Harper D."/>
            <person name="Lindsay R."/>
            <person name="Hauser H."/>
            <person name="James K.D."/>
            <person name="Quiles M."/>
            <person name="Madan Babu M."/>
            <person name="Saito T."/>
            <person name="Buchrieser C."/>
            <person name="Wardroper A."/>
            <person name="Felder M."/>
            <person name="Thangavelu M."/>
            <person name="Johnson D."/>
            <person name="Knights A."/>
            <person name="Loulseged H."/>
            <person name="Mungall K.L."/>
            <person name="Oliver K."/>
            <person name="Price C."/>
            <person name="Quail M.A."/>
            <person name="Urushihara H."/>
            <person name="Hernandez J."/>
            <person name="Rabbinowitsch E."/>
            <person name="Steffen D."/>
            <person name="Sanders M."/>
            <person name="Ma J."/>
            <person name="Kohara Y."/>
            <person name="Sharp S."/>
            <person name="Simmonds M.N."/>
            <person name="Spiegler S."/>
            <person name="Tivey A."/>
            <person name="Sugano S."/>
            <person name="White B."/>
            <person name="Walker D."/>
            <person name="Woodward J.R."/>
            <person name="Winckler T."/>
            <person name="Tanaka Y."/>
            <person name="Shaulsky G."/>
            <person name="Schleicher M."/>
            <person name="Weinstock G.M."/>
            <person name="Rosenthal A."/>
            <person name="Cox E.C."/>
            <person name="Chisholm R.L."/>
            <person name="Gibbs R.A."/>
            <person name="Loomis W.F."/>
            <person name="Platzer M."/>
            <person name="Kay R.R."/>
            <person name="Williams J.G."/>
            <person name="Dear P.H."/>
            <person name="Noegel A.A."/>
            <person name="Barrell B.G."/>
            <person name="Kuspa A."/>
        </authorList>
    </citation>
    <scope>NUCLEOTIDE SEQUENCE [LARGE SCALE GENOMIC DNA]</scope>
    <source>
        <strain>AX4</strain>
    </source>
</reference>
<organism>
    <name type="scientific">Dictyostelium discoideum</name>
    <name type="common">Social amoeba</name>
    <dbReference type="NCBI Taxonomy" id="44689"/>
    <lineage>
        <taxon>Eukaryota</taxon>
        <taxon>Amoebozoa</taxon>
        <taxon>Evosea</taxon>
        <taxon>Eumycetozoa</taxon>
        <taxon>Dictyostelia</taxon>
        <taxon>Dictyosteliales</taxon>
        <taxon>Dictyosteliaceae</taxon>
        <taxon>Dictyostelium</taxon>
    </lineage>
</organism>
<gene>
    <name type="ORF">DDB_G0289765</name>
</gene>